<protein>
    <recommendedName>
        <fullName evidence="1">Arginine--tRNA ligase</fullName>
        <ecNumber evidence="1">6.1.1.19</ecNumber>
    </recommendedName>
    <alternativeName>
        <fullName evidence="1">Arginyl-tRNA synthetase</fullName>
        <shortName evidence="1">ArgRS</shortName>
    </alternativeName>
</protein>
<proteinExistence type="inferred from homology"/>
<dbReference type="EC" id="6.1.1.19" evidence="1"/>
<dbReference type="EMBL" id="CP001047">
    <property type="protein sequence ID" value="ACF07071.1"/>
    <property type="molecule type" value="Genomic_DNA"/>
</dbReference>
<dbReference type="RefSeq" id="WP_012498028.1">
    <property type="nucleotide sequence ID" value="NC_011025.1"/>
</dbReference>
<dbReference type="SMR" id="B3PM19"/>
<dbReference type="STRING" id="243272.MARTH_orf134"/>
<dbReference type="KEGG" id="mat:MARTH_orf134"/>
<dbReference type="eggNOG" id="COG0018">
    <property type="taxonomic scope" value="Bacteria"/>
</dbReference>
<dbReference type="HOGENOM" id="CLU_006406_0_1_14"/>
<dbReference type="Proteomes" id="UP000008812">
    <property type="component" value="Chromosome"/>
</dbReference>
<dbReference type="GO" id="GO:0005737">
    <property type="term" value="C:cytoplasm"/>
    <property type="evidence" value="ECO:0007669"/>
    <property type="project" value="UniProtKB-SubCell"/>
</dbReference>
<dbReference type="GO" id="GO:0004814">
    <property type="term" value="F:arginine-tRNA ligase activity"/>
    <property type="evidence" value="ECO:0007669"/>
    <property type="project" value="UniProtKB-UniRule"/>
</dbReference>
<dbReference type="GO" id="GO:0005524">
    <property type="term" value="F:ATP binding"/>
    <property type="evidence" value="ECO:0007669"/>
    <property type="project" value="UniProtKB-UniRule"/>
</dbReference>
<dbReference type="GO" id="GO:0006420">
    <property type="term" value="P:arginyl-tRNA aminoacylation"/>
    <property type="evidence" value="ECO:0007669"/>
    <property type="project" value="UniProtKB-UniRule"/>
</dbReference>
<dbReference type="CDD" id="cd00671">
    <property type="entry name" value="ArgRS_core"/>
    <property type="match status" value="1"/>
</dbReference>
<dbReference type="Gene3D" id="3.30.1360.70">
    <property type="entry name" value="Arginyl tRNA synthetase N-terminal domain"/>
    <property type="match status" value="1"/>
</dbReference>
<dbReference type="Gene3D" id="3.40.50.620">
    <property type="entry name" value="HUPs"/>
    <property type="match status" value="1"/>
</dbReference>
<dbReference type="Gene3D" id="1.10.730.10">
    <property type="entry name" value="Isoleucyl-tRNA Synthetase, Domain 1"/>
    <property type="match status" value="1"/>
</dbReference>
<dbReference type="HAMAP" id="MF_00123">
    <property type="entry name" value="Arg_tRNA_synth"/>
    <property type="match status" value="1"/>
</dbReference>
<dbReference type="InterPro" id="IPR001412">
    <property type="entry name" value="aa-tRNA-synth_I_CS"/>
</dbReference>
<dbReference type="InterPro" id="IPR001278">
    <property type="entry name" value="Arg-tRNA-ligase"/>
</dbReference>
<dbReference type="InterPro" id="IPR005148">
    <property type="entry name" value="Arg-tRNA-synth_N"/>
</dbReference>
<dbReference type="InterPro" id="IPR036695">
    <property type="entry name" value="Arg-tRNA-synth_N_sf"/>
</dbReference>
<dbReference type="InterPro" id="IPR035684">
    <property type="entry name" value="ArgRS_core"/>
</dbReference>
<dbReference type="InterPro" id="IPR008909">
    <property type="entry name" value="DALR_anticod-bd"/>
</dbReference>
<dbReference type="InterPro" id="IPR014729">
    <property type="entry name" value="Rossmann-like_a/b/a_fold"/>
</dbReference>
<dbReference type="InterPro" id="IPR009080">
    <property type="entry name" value="tRNAsynth_Ia_anticodon-bd"/>
</dbReference>
<dbReference type="NCBIfam" id="TIGR00456">
    <property type="entry name" value="argS"/>
    <property type="match status" value="1"/>
</dbReference>
<dbReference type="PANTHER" id="PTHR11956:SF5">
    <property type="entry name" value="ARGININE--TRNA LIGASE, CYTOPLASMIC"/>
    <property type="match status" value="1"/>
</dbReference>
<dbReference type="PANTHER" id="PTHR11956">
    <property type="entry name" value="ARGINYL-TRNA SYNTHETASE"/>
    <property type="match status" value="1"/>
</dbReference>
<dbReference type="Pfam" id="PF03485">
    <property type="entry name" value="Arg_tRNA_synt_N"/>
    <property type="match status" value="1"/>
</dbReference>
<dbReference type="Pfam" id="PF05746">
    <property type="entry name" value="DALR_1"/>
    <property type="match status" value="1"/>
</dbReference>
<dbReference type="Pfam" id="PF00750">
    <property type="entry name" value="tRNA-synt_1d"/>
    <property type="match status" value="1"/>
</dbReference>
<dbReference type="PRINTS" id="PR01038">
    <property type="entry name" value="TRNASYNTHARG"/>
</dbReference>
<dbReference type="SMART" id="SM01016">
    <property type="entry name" value="Arg_tRNA_synt_N"/>
    <property type="match status" value="1"/>
</dbReference>
<dbReference type="SMART" id="SM00836">
    <property type="entry name" value="DALR_1"/>
    <property type="match status" value="1"/>
</dbReference>
<dbReference type="SUPFAM" id="SSF47323">
    <property type="entry name" value="Anticodon-binding domain of a subclass of class I aminoacyl-tRNA synthetases"/>
    <property type="match status" value="1"/>
</dbReference>
<dbReference type="SUPFAM" id="SSF55190">
    <property type="entry name" value="Arginyl-tRNA synthetase (ArgRS), N-terminal 'additional' domain"/>
    <property type="match status" value="1"/>
</dbReference>
<dbReference type="SUPFAM" id="SSF52374">
    <property type="entry name" value="Nucleotidylyl transferase"/>
    <property type="match status" value="1"/>
</dbReference>
<dbReference type="PROSITE" id="PS00178">
    <property type="entry name" value="AA_TRNA_LIGASE_I"/>
    <property type="match status" value="1"/>
</dbReference>
<accession>B3PM19</accession>
<sequence>MITTKEIIIASLNEALEKLEIKKPITLTEPKSYGDYSTNLALTLQKELGKPAIEIAKEIVNAIDLKKHKEIVKVEVANPGFINFWVSNSVLSDLVNSINSLEDHYGDMSKEGKGAVNIEFVSANPTGFLHIGHARNAAIGATLCNVLEKAGHRVVREYYVNDYGNQMNNLAASVFSRYQQIFNKDFPMPDDAYKGHDMTIFADAFFKKYGDKYRNVAYTEEVKKLFRDFGREIALENIKIDLGRFGVWFDLYTSETQQYEKDRVWPVIRRLKSTYEKDGATWLNTTKGGNDDKDRVIIKGNGESTYMCADIAYHEQKFVELHDPEKGKIIDIWGADHSGYVERIKFSFEDLGWRRDQIEILLFQLLRVVKNGKEIKMSKRLGTSLTLRELLDLVGKDAVRYFLIERSYNSKIDFDINKVQKSDETNPLFLIKYAHARCYQLLEKAQIKNPIASNLENDFAQKLTNELKEYPNLIDTMAKTYKVNLLPPYLLKLAGAFNSFYSNVRISGDPNEQSYLALVKATKIVLANAMKLMDLDIPNKM</sequence>
<reference key="1">
    <citation type="journal article" date="2008" name="Infect. Immun.">
        <title>Genome of Mycoplasma arthritidis.</title>
        <authorList>
            <person name="Dybvig K."/>
            <person name="Zuhua C."/>
            <person name="Lao P."/>
            <person name="Jordan D.S."/>
            <person name="French C.T."/>
            <person name="Tu A.H."/>
            <person name="Loraine A.E."/>
        </authorList>
    </citation>
    <scope>NUCLEOTIDE SEQUENCE [LARGE SCALE GENOMIC DNA]</scope>
    <source>
        <strain>158L3-1</strain>
    </source>
</reference>
<keyword id="KW-0030">Aminoacyl-tRNA synthetase</keyword>
<keyword id="KW-0067">ATP-binding</keyword>
<keyword id="KW-0963">Cytoplasm</keyword>
<keyword id="KW-0436">Ligase</keyword>
<keyword id="KW-0547">Nucleotide-binding</keyword>
<keyword id="KW-0648">Protein biosynthesis</keyword>
<keyword id="KW-1185">Reference proteome</keyword>
<gene>
    <name evidence="1" type="primary">argS</name>
    <name type="ordered locus">MARTH_orf134</name>
</gene>
<feature type="chain" id="PRO_1000095381" description="Arginine--tRNA ligase">
    <location>
        <begin position="1"/>
        <end position="541"/>
    </location>
</feature>
<feature type="short sequence motif" description="'HIGH' region">
    <location>
        <begin position="123"/>
        <end position="133"/>
    </location>
</feature>
<organism>
    <name type="scientific">Metamycoplasma arthritidis (strain 158L3-1)</name>
    <name type="common">Mycoplasma arthritidis</name>
    <dbReference type="NCBI Taxonomy" id="243272"/>
    <lineage>
        <taxon>Bacteria</taxon>
        <taxon>Bacillati</taxon>
        <taxon>Mycoplasmatota</taxon>
        <taxon>Mycoplasmoidales</taxon>
        <taxon>Metamycoplasmataceae</taxon>
        <taxon>Metamycoplasma</taxon>
    </lineage>
</organism>
<name>SYR_META1</name>
<evidence type="ECO:0000255" key="1">
    <source>
        <dbReference type="HAMAP-Rule" id="MF_00123"/>
    </source>
</evidence>
<comment type="catalytic activity">
    <reaction evidence="1">
        <text>tRNA(Arg) + L-arginine + ATP = L-arginyl-tRNA(Arg) + AMP + diphosphate</text>
        <dbReference type="Rhea" id="RHEA:20301"/>
        <dbReference type="Rhea" id="RHEA-COMP:9658"/>
        <dbReference type="Rhea" id="RHEA-COMP:9673"/>
        <dbReference type="ChEBI" id="CHEBI:30616"/>
        <dbReference type="ChEBI" id="CHEBI:32682"/>
        <dbReference type="ChEBI" id="CHEBI:33019"/>
        <dbReference type="ChEBI" id="CHEBI:78442"/>
        <dbReference type="ChEBI" id="CHEBI:78513"/>
        <dbReference type="ChEBI" id="CHEBI:456215"/>
        <dbReference type="EC" id="6.1.1.19"/>
    </reaction>
</comment>
<comment type="subunit">
    <text evidence="1">Monomer.</text>
</comment>
<comment type="subcellular location">
    <subcellularLocation>
        <location evidence="1">Cytoplasm</location>
    </subcellularLocation>
</comment>
<comment type="similarity">
    <text evidence="1">Belongs to the class-I aminoacyl-tRNA synthetase family.</text>
</comment>